<reference evidence="8 9 10" key="1">
    <citation type="journal article" date="2007" name="Science">
        <title>Genomic minimalism in the early diverging intestinal parasite Giardia lamblia.</title>
        <authorList>
            <person name="Morrison H.G."/>
            <person name="McArthur A.G."/>
            <person name="Gillin F.D."/>
            <person name="Aley S.B."/>
            <person name="Adam R.D."/>
            <person name="Olsen G.J."/>
            <person name="Best A.A."/>
            <person name="Cande W.Z."/>
            <person name="Chen F."/>
            <person name="Cipriano M.J."/>
            <person name="Davids B.J."/>
            <person name="Dawson S.C."/>
            <person name="Elmendorf H.G."/>
            <person name="Hehl A.B."/>
            <person name="Holder M.E."/>
            <person name="Huse S.M."/>
            <person name="Kim U.U."/>
            <person name="Lasek-Nesselquist E."/>
            <person name="Manning G."/>
            <person name="Nigam A."/>
            <person name="Nixon J.E.J."/>
            <person name="Palm D."/>
            <person name="Passamaneck N.E."/>
            <person name="Prabhu A."/>
            <person name="Reich C.I."/>
            <person name="Reiner D.S."/>
            <person name="Samuelson J."/>
            <person name="Svard S.G."/>
            <person name="Sogin M.L."/>
        </authorList>
    </citation>
    <scope>NUCLEOTIDE SEQUENCE [LARGE SCALE GENOMIC DNA]</scope>
    <source>
        <strain evidence="10">ATCC 50803 / WB clone C6</strain>
    </source>
</reference>
<reference key="2">
    <citation type="journal article" date="2019" name="Elife">
        <title>Length-dependent disassembly maintains four different flagellar lengths in Giardia.</title>
        <authorList>
            <person name="McInally S.G."/>
            <person name="Kondev J."/>
            <person name="Dawson S.C."/>
        </authorList>
    </citation>
    <scope>FUNCTION</scope>
    <scope>SUBCELLULAR LOCATION</scope>
    <source>
        <strain evidence="5">ATCC 50803 / WB clone C6</strain>
    </source>
</reference>
<organism evidence="9 10">
    <name type="scientific">Giardia intestinalis (strain ATCC 50803 / WB clone C6)</name>
    <name type="common">Giardia lamblia</name>
    <dbReference type="NCBI Taxonomy" id="184922"/>
    <lineage>
        <taxon>Eukaryota</taxon>
        <taxon>Metamonada</taxon>
        <taxon>Diplomonadida</taxon>
        <taxon>Hexamitidae</taxon>
        <taxon>Giardiinae</taxon>
        <taxon>Giardia</taxon>
    </lineage>
</organism>
<protein>
    <recommendedName>
        <fullName evidence="5">Intraflagellar transport protein 88</fullName>
        <shortName evidence="5">IFT88</shortName>
    </recommendedName>
    <alternativeName>
        <fullName evidence="8">Intraflagellar transport particle protein IFT88</fullName>
    </alternativeName>
    <alternativeName>
        <fullName evidence="9">Intraflagellar transport protein IFT88</fullName>
    </alternativeName>
</protein>
<gene>
    <name evidence="9" type="ORF">GL50803_0016660</name>
    <name evidence="8" type="ORF">GL50803_16660</name>
</gene>
<evidence type="ECO:0000255" key="1"/>
<evidence type="ECO:0000255" key="2">
    <source>
        <dbReference type="PROSITE-ProRule" id="PRU00339"/>
    </source>
</evidence>
<evidence type="ECO:0000256" key="3">
    <source>
        <dbReference type="SAM" id="MobiDB-lite"/>
    </source>
</evidence>
<evidence type="ECO:0000269" key="4">
    <source>
    </source>
</evidence>
<evidence type="ECO:0000303" key="5">
    <source>
    </source>
</evidence>
<evidence type="ECO:0000305" key="6"/>
<evidence type="ECO:0000305" key="7">
    <source>
    </source>
</evidence>
<evidence type="ECO:0000312" key="8">
    <source>
        <dbReference type="EMBL" id="EDO77888.1"/>
    </source>
</evidence>
<evidence type="ECO:0000312" key="9">
    <source>
        <dbReference type="EMBL" id="KAE8304085.1"/>
    </source>
</evidence>
<evidence type="ECO:0000312" key="10">
    <source>
        <dbReference type="Proteomes" id="UP000001548"/>
    </source>
</evidence>
<comment type="function">
    <text evidence="7">Component of the intraflagellar transport complex B (IFT-B) involved in flagellar assembly (Probable).</text>
</comment>
<comment type="subcellular location">
    <subcellularLocation>
        <location evidence="4">Cell projection</location>
        <location evidence="4">Cilium</location>
        <location evidence="4">Flagellum</location>
    </subcellularLocation>
    <subcellularLocation>
        <location evidence="4">Cytoplasm</location>
        <location evidence="4">Cytoskeleton</location>
        <location evidence="4">Flagellum axoneme</location>
    </subcellularLocation>
    <subcellularLocation>
        <location evidence="4">Cytoplasm</location>
        <location evidence="4">Cytoskeleton</location>
        <location evidence="4">Flagellum basal body</location>
    </subcellularLocation>
    <text evidence="4">Localizes to the cytoplasmic and membrane-bound portions of each of the eight axonemes, localizing particularly at the flagellar pores and at the distal flagellar tips. Localizes to the basal bodies.</text>
</comment>
<comment type="sequence caution" evidence="6">
    <conflict type="erroneous initiation">
        <sequence resource="EMBL-CDS" id="EDO77888"/>
    </conflict>
    <text>Extended N-terminus.</text>
</comment>
<dbReference type="EMBL" id="AACB02000032">
    <property type="protein sequence ID" value="EDO77888.1"/>
    <property type="status" value="ALT_INIT"/>
    <property type="molecule type" value="Genomic_DNA"/>
</dbReference>
<dbReference type="EMBL" id="AACB03000002">
    <property type="protein sequence ID" value="KAE8304085.1"/>
    <property type="molecule type" value="Genomic_DNA"/>
</dbReference>
<dbReference type="RefSeq" id="XP_001705562.1">
    <property type="nucleotide sequence ID" value="XM_001705510.1"/>
</dbReference>
<dbReference type="SMR" id="A0A644F649"/>
<dbReference type="STRING" id="184922.A0A644F649"/>
<dbReference type="EnsemblProtists" id="EDO77888">
    <property type="protein sequence ID" value="EDO77888"/>
    <property type="gene ID" value="GL50803_16660"/>
</dbReference>
<dbReference type="GeneID" id="5698466"/>
<dbReference type="KEGG" id="gla:GL50803_0016660"/>
<dbReference type="VEuPathDB" id="GiardiaDB:GL50803_16660"/>
<dbReference type="HOGENOM" id="CLU_010738_1_0_1"/>
<dbReference type="InParanoid" id="A0A644F649"/>
<dbReference type="Proteomes" id="UP000001548">
    <property type="component" value="Chromosome 4"/>
</dbReference>
<dbReference type="GO" id="GO:0097729">
    <property type="term" value="C:9+2 motile cilium"/>
    <property type="evidence" value="ECO:0000314"/>
    <property type="project" value="UniProtKB"/>
</dbReference>
<dbReference type="GO" id="GO:0005930">
    <property type="term" value="C:axoneme"/>
    <property type="evidence" value="ECO:0000314"/>
    <property type="project" value="UniProtKB"/>
</dbReference>
<dbReference type="GO" id="GO:0005814">
    <property type="term" value="C:centriole"/>
    <property type="evidence" value="ECO:0000318"/>
    <property type="project" value="GO_Central"/>
</dbReference>
<dbReference type="GO" id="GO:0036064">
    <property type="term" value="C:ciliary basal body"/>
    <property type="evidence" value="ECO:0000314"/>
    <property type="project" value="UniProtKB"/>
</dbReference>
<dbReference type="GO" id="GO:0097546">
    <property type="term" value="C:ciliary base"/>
    <property type="evidence" value="ECO:0000318"/>
    <property type="project" value="GO_Central"/>
</dbReference>
<dbReference type="GO" id="GO:1990900">
    <property type="term" value="C:ciliary pocket collar"/>
    <property type="evidence" value="ECO:0000314"/>
    <property type="project" value="UniProtKB"/>
</dbReference>
<dbReference type="GO" id="GO:0097542">
    <property type="term" value="C:ciliary tip"/>
    <property type="evidence" value="ECO:0000314"/>
    <property type="project" value="UniProtKB"/>
</dbReference>
<dbReference type="GO" id="GO:0030992">
    <property type="term" value="C:intraciliary transport particle B"/>
    <property type="evidence" value="ECO:0000305"/>
    <property type="project" value="UniProtKB"/>
</dbReference>
<dbReference type="GO" id="GO:0097730">
    <property type="term" value="C:non-motile cilium"/>
    <property type="evidence" value="ECO:0000318"/>
    <property type="project" value="GO_Central"/>
</dbReference>
<dbReference type="GO" id="GO:0019894">
    <property type="term" value="F:kinesin binding"/>
    <property type="evidence" value="ECO:0000318"/>
    <property type="project" value="GO_Central"/>
</dbReference>
<dbReference type="GO" id="GO:0060271">
    <property type="term" value="P:cilium assembly"/>
    <property type="evidence" value="ECO:0000305"/>
    <property type="project" value="UniProtKB"/>
</dbReference>
<dbReference type="GO" id="GO:0035735">
    <property type="term" value="P:intraciliary transport involved in cilium assembly"/>
    <property type="evidence" value="ECO:0000305"/>
    <property type="project" value="UniProtKB"/>
</dbReference>
<dbReference type="FunFam" id="1.25.40.10:FF:002251">
    <property type="entry name" value="Intraflagellar transport particle protein IFT88"/>
    <property type="match status" value="1"/>
</dbReference>
<dbReference type="FunFam" id="1.25.40.10:FF:002783">
    <property type="entry name" value="Intraflagellar transport particle protein IFT88"/>
    <property type="match status" value="1"/>
</dbReference>
<dbReference type="Gene3D" id="1.25.40.10">
    <property type="entry name" value="Tetratricopeptide repeat domain"/>
    <property type="match status" value="2"/>
</dbReference>
<dbReference type="InterPro" id="IPR011990">
    <property type="entry name" value="TPR-like_helical_dom_sf"/>
</dbReference>
<dbReference type="InterPro" id="IPR019734">
    <property type="entry name" value="TPR_rpt"/>
</dbReference>
<dbReference type="PANTHER" id="PTHR44117">
    <property type="entry name" value="INTRAFLAGELLAR TRANSPORT PROTEIN 88 HOMOLOG"/>
    <property type="match status" value="1"/>
</dbReference>
<dbReference type="PANTHER" id="PTHR44117:SF1">
    <property type="entry name" value="INTRAFLAGELLAR TRANSPORT PROTEIN 88 HOMOLOG"/>
    <property type="match status" value="1"/>
</dbReference>
<dbReference type="Pfam" id="PF13174">
    <property type="entry name" value="TPR_6"/>
    <property type="match status" value="2"/>
</dbReference>
<dbReference type="Pfam" id="PF13181">
    <property type="entry name" value="TPR_8"/>
    <property type="match status" value="1"/>
</dbReference>
<dbReference type="SMART" id="SM00028">
    <property type="entry name" value="TPR"/>
    <property type="match status" value="9"/>
</dbReference>
<dbReference type="SUPFAM" id="SSF48452">
    <property type="entry name" value="TPR-like"/>
    <property type="match status" value="2"/>
</dbReference>
<dbReference type="PROSITE" id="PS50005">
    <property type="entry name" value="TPR"/>
    <property type="match status" value="4"/>
</dbReference>
<keyword id="KW-0966">Cell projection</keyword>
<keyword id="KW-0969">Cilium</keyword>
<keyword id="KW-0970">Cilium biogenesis/degradation</keyword>
<keyword id="KW-0963">Cytoplasm</keyword>
<keyword id="KW-0206">Cytoskeleton</keyword>
<keyword id="KW-0282">Flagellum</keyword>
<keyword id="KW-1185">Reference proteome</keyword>
<keyword id="KW-0677">Repeat</keyword>
<keyword id="KW-0802">TPR repeat</keyword>
<proteinExistence type="predicted"/>
<accession>A0A644F649</accession>
<accession>A8BQ09</accession>
<feature type="chain" id="PRO_0000459311" description="Intraflagellar transport protein 88">
    <location>
        <begin position="1"/>
        <end position="831"/>
    </location>
</feature>
<feature type="repeat" description="TPR 1" evidence="1">
    <location>
        <begin position="68"/>
        <end position="101"/>
    </location>
</feature>
<feature type="repeat" description="TPR 2" evidence="1">
    <location>
        <begin position="120"/>
        <end position="153"/>
    </location>
</feature>
<feature type="repeat" description="TPR 3" evidence="2">
    <location>
        <begin position="156"/>
        <end position="189"/>
    </location>
</feature>
<feature type="repeat" description="TPR 4" evidence="1">
    <location>
        <begin position="248"/>
        <end position="281"/>
    </location>
</feature>
<feature type="repeat" description="TPR 5" evidence="2">
    <location>
        <begin position="492"/>
        <end position="525"/>
    </location>
</feature>
<feature type="repeat" description="TPR 6" evidence="2">
    <location>
        <begin position="526"/>
        <end position="559"/>
    </location>
</feature>
<feature type="repeat" description="TPR 7" evidence="2">
    <location>
        <begin position="560"/>
        <end position="593"/>
    </location>
</feature>
<feature type="repeat" description="TPR 8" evidence="1">
    <location>
        <begin position="595"/>
        <end position="627"/>
    </location>
</feature>
<feature type="repeat" description="TPR 9" evidence="2">
    <location>
        <begin position="632"/>
        <end position="665"/>
    </location>
</feature>
<feature type="repeat" description="TPR 10" evidence="2">
    <location>
        <begin position="666"/>
        <end position="699"/>
    </location>
</feature>
<feature type="repeat" description="TPR 11" evidence="2">
    <location>
        <begin position="700"/>
        <end position="733"/>
    </location>
</feature>
<feature type="region of interest" description="Disordered" evidence="3">
    <location>
        <begin position="785"/>
        <end position="816"/>
    </location>
</feature>
<feature type="compositionally biased region" description="Polar residues" evidence="3">
    <location>
        <begin position="805"/>
        <end position="815"/>
    </location>
</feature>
<sequence>MTQNWRPQSRLQTMTFAGTARPMTSMTAAGFTKNPLATAGVASIFDKLPPEPPKDSPEQKADQMEINIFKLLRDGMSAASCKDYVTALGRIREAIKLEQKVSQHRTMNGLADSINLDLRTCIWMHWAQIQALGGQPEMALSTYEKIVKTAEGATLAQIRFNMGNINHNLGKYNEALKNFRMAIDQASPSLPRFRQKIASHMAQSCIKLHRWQDAVDRIEEYLIKQYTLASSVGTDVERQNFYAMTTRFDPLYTVLIGYYALGVPEKMIDAYSRLIDSSILISDHPDSLEIDDHHNGISSKQIAMADAELCNMSNDDELDDLSRYNATLRHEHTNKLLISARLLAPAIAWEESQGYAKLSDILREKGHHGISLQVQMSMALTLLKRNEFEKATDIMLRIDREGLESALALGINVPLSILQKTRNLSLTAAATAVTNQESDLHLLGIDPSVLANQQSVVDRDAVASRGAPEVDMLKTDDDNGTKKQPYAAFVPRGVHTNIAFIYYLKGDYEASARHAQIALEIDPYDSFAHINLGCTYSKTNQWELSLREFLKAQEINMESVQATYNAGLVYFKQQEYKTAYSCFQKVASKLPSYGDAIYMSADCLARMSQIDEAIQMLSNLVTMFSAVKAYDPSIYIRLGELYSIAGDEGQAAHYFKEAHRLVPFSLAVINWLGSHYIKNELYEQARVCFEKASRVDTTTPKWSLAVAACLRKSKQYRDAIYEYKHILKRFPTNTTAMTHLISSLNNIGQHKEADEWAEKLTKLTNNKVPEVTEDRELDEFVKQERRNSVAAVGPGSRAGQDRFEASNNRVSSNTGDLFGDVDIAEELLTEN</sequence>
<name>IFT88_GIAIC</name>